<name>NCA3_YEAST</name>
<proteinExistence type="inferred from homology"/>
<dbReference type="EMBL" id="L20786">
    <property type="protein sequence ID" value="AAC37467.1"/>
    <property type="molecule type" value="Genomic_DNA"/>
</dbReference>
<dbReference type="EMBL" id="Z49391">
    <property type="protein sequence ID" value="CAA89411.1"/>
    <property type="molecule type" value="Genomic_DNA"/>
</dbReference>
<dbReference type="EMBL" id="AY557880">
    <property type="protein sequence ID" value="AAS56206.1"/>
    <property type="molecule type" value="Genomic_DNA"/>
</dbReference>
<dbReference type="EMBL" id="D63817">
    <property type="protein sequence ID" value="BAA09886.1"/>
    <property type="molecule type" value="Genomic_DNA"/>
</dbReference>
<dbReference type="EMBL" id="BK006943">
    <property type="protein sequence ID" value="DAA08684.1"/>
    <property type="molecule type" value="Genomic_DNA"/>
</dbReference>
<dbReference type="PIR" id="S55932">
    <property type="entry name" value="S55932"/>
</dbReference>
<dbReference type="RefSeq" id="NP_012419.1">
    <property type="nucleotide sequence ID" value="NM_001181549.1"/>
</dbReference>
<dbReference type="BioGRID" id="33638">
    <property type="interactions" value="131"/>
</dbReference>
<dbReference type="FunCoup" id="P46955">
    <property type="interactions" value="65"/>
</dbReference>
<dbReference type="STRING" id="4932.YJL116C"/>
<dbReference type="PaxDb" id="4932-YJL116C"/>
<dbReference type="PeptideAtlas" id="P46955"/>
<dbReference type="EnsemblFungi" id="YJL116C_mRNA">
    <property type="protein sequence ID" value="YJL116C"/>
    <property type="gene ID" value="YJL116C"/>
</dbReference>
<dbReference type="GeneID" id="853326"/>
<dbReference type="KEGG" id="sce:YJL116C"/>
<dbReference type="AGR" id="SGD:S000003652"/>
<dbReference type="SGD" id="S000003652">
    <property type="gene designation" value="NCA3"/>
</dbReference>
<dbReference type="VEuPathDB" id="FungiDB:YJL116C"/>
<dbReference type="eggNOG" id="ENOG502QREM">
    <property type="taxonomic scope" value="Eukaryota"/>
</dbReference>
<dbReference type="GeneTree" id="ENSGT00940000176328"/>
<dbReference type="HOGENOM" id="CLU_033459_0_0_1"/>
<dbReference type="InParanoid" id="P46955"/>
<dbReference type="OMA" id="SIMNMDA"/>
<dbReference type="OrthoDB" id="5339822at2759"/>
<dbReference type="BioCyc" id="YEAST:G3O-31570-MONOMER"/>
<dbReference type="BioGRID-ORCS" id="853326">
    <property type="hits" value="2 hits in 10 CRISPR screens"/>
</dbReference>
<dbReference type="PRO" id="PR:P46955"/>
<dbReference type="Proteomes" id="UP000002311">
    <property type="component" value="Chromosome X"/>
</dbReference>
<dbReference type="RNAct" id="P46955">
    <property type="molecule type" value="protein"/>
</dbReference>
<dbReference type="GO" id="GO:0009986">
    <property type="term" value="C:cell surface"/>
    <property type="evidence" value="ECO:0000318"/>
    <property type="project" value="GO_Central"/>
</dbReference>
<dbReference type="GO" id="GO:0009277">
    <property type="term" value="C:fungal-type cell wall"/>
    <property type="evidence" value="ECO:0000318"/>
    <property type="project" value="GO_Central"/>
</dbReference>
<dbReference type="GO" id="GO:0000324">
    <property type="term" value="C:fungal-type vacuole"/>
    <property type="evidence" value="ECO:0007005"/>
    <property type="project" value="SGD"/>
</dbReference>
<dbReference type="GO" id="GO:0005739">
    <property type="term" value="C:mitochondrion"/>
    <property type="evidence" value="ECO:0007669"/>
    <property type="project" value="UniProtKB-SubCell"/>
</dbReference>
<dbReference type="GO" id="GO:0031505">
    <property type="term" value="P:fungal-type cell wall organization"/>
    <property type="evidence" value="ECO:0000318"/>
    <property type="project" value="GO_Central"/>
</dbReference>
<dbReference type="GO" id="GO:0042776">
    <property type="term" value="P:proton motive force-driven mitochondrial ATP synthesis"/>
    <property type="evidence" value="ECO:0000316"/>
    <property type="project" value="SGD"/>
</dbReference>
<dbReference type="InterPro" id="IPR051526">
    <property type="entry name" value="Beta-Glucosidase_SUN"/>
</dbReference>
<dbReference type="InterPro" id="IPR005556">
    <property type="entry name" value="SUN"/>
</dbReference>
<dbReference type="PANTHER" id="PTHR31316">
    <property type="entry name" value="BETA-GLUCOSIDASE-LIKE PROTEIN NCA3, MITOCHONDRIAL-RELATED"/>
    <property type="match status" value="1"/>
</dbReference>
<dbReference type="PANTHER" id="PTHR31316:SF2">
    <property type="entry name" value="BETA-GLUCOSIDASE-LIKE PROTEIN NCA3, MITOCHONDRIAL-RELATED"/>
    <property type="match status" value="1"/>
</dbReference>
<dbReference type="Pfam" id="PF03856">
    <property type="entry name" value="SUN"/>
    <property type="match status" value="1"/>
</dbReference>
<evidence type="ECO:0000255" key="1"/>
<evidence type="ECO:0000256" key="2">
    <source>
        <dbReference type="SAM" id="MobiDB-lite"/>
    </source>
</evidence>
<evidence type="ECO:0000305" key="3"/>
<sequence length="337" mass="35412">MKISAALILSSLSSVAFSAPAPAPADSHHEDHHKDEKPAVVTVTQYIDSNAATSTVESAATTTTLSSSEKDTSEQKRDGGFQDGTVKCSDFPSVNGIVSLDWLGFGGWASVMDMDANTSSECKDGYYCSYACEPGMSKTQWPSDQPSDGKSVGGLYCKNGYLYRTNTDTSDLCSTDETSAKAINKKSDSIALCRTDYPGSENMVIPTVVDGGDSQPISVVDEDTYYQWQGKKTSAQYYINNAGVSAEDGCIWGTSGSDVGNWAPLVLGAGSTNGETYLSLIPNPNSNQAANFNVKIVASDGANVQGSCAYEDGSFTGDGSDGCTVSVLSGSAEFVFY</sequence>
<keyword id="KW-0496">Mitochondrion</keyword>
<keyword id="KW-1185">Reference proteome</keyword>
<keyword id="KW-0809">Transit peptide</keyword>
<gene>
    <name type="primary">NCA3</name>
    <name type="ordered locus">YJL116C</name>
    <name type="ORF">J0748</name>
</gene>
<feature type="transit peptide" description="Mitochondrion" evidence="1">
    <location>
        <begin position="1"/>
        <end status="unknown"/>
    </location>
</feature>
<feature type="chain" id="PRO_0000033463" description="Beta-glucosidase-like protein NCA3, mitochondrial">
    <location>
        <begin status="unknown"/>
        <end position="337"/>
    </location>
</feature>
<feature type="region of interest" description="Disordered" evidence="2">
    <location>
        <begin position="57"/>
        <end position="84"/>
    </location>
</feature>
<feature type="compositionally biased region" description="Low complexity" evidence="2">
    <location>
        <begin position="57"/>
        <end position="67"/>
    </location>
</feature>
<feature type="compositionally biased region" description="Basic and acidic residues" evidence="2">
    <location>
        <begin position="68"/>
        <end position="80"/>
    </location>
</feature>
<feature type="sequence conflict" description="In Ref. 5; AAS56206." evidence="3" ref="5">
    <original>F</original>
    <variation>L</variation>
    <location>
        <position position="292"/>
    </location>
</feature>
<organism>
    <name type="scientific">Saccharomyces cerevisiae (strain ATCC 204508 / S288c)</name>
    <name type="common">Baker's yeast</name>
    <dbReference type="NCBI Taxonomy" id="559292"/>
    <lineage>
        <taxon>Eukaryota</taxon>
        <taxon>Fungi</taxon>
        <taxon>Dikarya</taxon>
        <taxon>Ascomycota</taxon>
        <taxon>Saccharomycotina</taxon>
        <taxon>Saccharomycetes</taxon>
        <taxon>Saccharomycetales</taxon>
        <taxon>Saccharomycetaceae</taxon>
        <taxon>Saccharomyces</taxon>
    </lineage>
</organism>
<reference key="1">
    <citation type="journal article" date="1995" name="Curr. Genet.">
        <title>NCA3, a nuclear gene involved in the mitochondrial expression of subunits 6 and 8 of the Fo-F1 ATP synthase of S. cerevisiae.</title>
        <authorList>
            <person name="Pelissier P."/>
            <person name="Camougrand N."/>
            <person name="Velours G."/>
            <person name="Guerin M."/>
        </authorList>
    </citation>
    <scope>NUCLEOTIDE SEQUENCE [GENOMIC DNA]</scope>
</reference>
<reference key="2">
    <citation type="journal article" date="1996" name="Yeast">
        <title>Sequencing analysis of a 40.2 kb fragment of yeast chromosome X reveals 19 open reading frames including URA2 (5' end), TRK1, PBS2, SPT10, GCD14, RPE1, PHO86, NCA3, ASF1, CCT7, GZF3, two tRNA genes, three remnant delta elements and a Ty4 transposon.</title>
        <authorList>
            <person name="Cziepluch C."/>
            <person name="Kordes E."/>
            <person name="Pujol A."/>
            <person name="Jauniaux J.-C."/>
        </authorList>
    </citation>
    <scope>NUCLEOTIDE SEQUENCE [GENOMIC DNA]</scope>
    <source>
        <strain>ATCC 96604 / S288c / FY1679</strain>
    </source>
</reference>
<reference key="3">
    <citation type="journal article" date="1996" name="EMBO J.">
        <title>Complete nucleotide sequence of Saccharomyces cerevisiae chromosome X.</title>
        <authorList>
            <person name="Galibert F."/>
            <person name="Alexandraki D."/>
            <person name="Baur A."/>
            <person name="Boles E."/>
            <person name="Chalwatzis N."/>
            <person name="Chuat J.-C."/>
            <person name="Coster F."/>
            <person name="Cziepluch C."/>
            <person name="de Haan M."/>
            <person name="Domdey H."/>
            <person name="Durand P."/>
            <person name="Entian K.-D."/>
            <person name="Gatius M."/>
            <person name="Goffeau A."/>
            <person name="Grivell L.A."/>
            <person name="Hennemann A."/>
            <person name="Herbert C.J."/>
            <person name="Heumann K."/>
            <person name="Hilger F."/>
            <person name="Hollenberg C.P."/>
            <person name="Huang M.-E."/>
            <person name="Jacq C."/>
            <person name="Jauniaux J.-C."/>
            <person name="Katsoulou C."/>
            <person name="Kirchrath L."/>
            <person name="Kleine K."/>
            <person name="Kordes E."/>
            <person name="Koetter P."/>
            <person name="Liebl S."/>
            <person name="Louis E.J."/>
            <person name="Manus V."/>
            <person name="Mewes H.-W."/>
            <person name="Miosga T."/>
            <person name="Obermaier B."/>
            <person name="Perea J."/>
            <person name="Pohl T.M."/>
            <person name="Portetelle D."/>
            <person name="Pujol A."/>
            <person name="Purnelle B."/>
            <person name="Ramezani Rad M."/>
            <person name="Rasmussen S.W."/>
            <person name="Rose M."/>
            <person name="Rossau R."/>
            <person name="Schaaff-Gerstenschlaeger I."/>
            <person name="Smits P.H.M."/>
            <person name="Scarcez T."/>
            <person name="Soriano N."/>
            <person name="To Van D."/>
            <person name="Tzermia M."/>
            <person name="Van Broekhoven A."/>
            <person name="Vandenbol M."/>
            <person name="Wedler H."/>
            <person name="von Wettstein D."/>
            <person name="Wambutt R."/>
            <person name="Zagulski M."/>
            <person name="Zollner A."/>
            <person name="Karpfinger-Hartl L."/>
        </authorList>
    </citation>
    <scope>NUCLEOTIDE SEQUENCE [LARGE SCALE GENOMIC DNA]</scope>
    <source>
        <strain>ATCC 204508 / S288c</strain>
    </source>
</reference>
<reference key="4">
    <citation type="journal article" date="2014" name="G3 (Bethesda)">
        <title>The reference genome sequence of Saccharomyces cerevisiae: Then and now.</title>
        <authorList>
            <person name="Engel S.R."/>
            <person name="Dietrich F.S."/>
            <person name="Fisk D.G."/>
            <person name="Binkley G."/>
            <person name="Balakrishnan R."/>
            <person name="Costanzo M.C."/>
            <person name="Dwight S.S."/>
            <person name="Hitz B.C."/>
            <person name="Karra K."/>
            <person name="Nash R.S."/>
            <person name="Weng S."/>
            <person name="Wong E.D."/>
            <person name="Lloyd P."/>
            <person name="Skrzypek M.S."/>
            <person name="Miyasato S.R."/>
            <person name="Simison M."/>
            <person name="Cherry J.M."/>
        </authorList>
    </citation>
    <scope>GENOME REANNOTATION</scope>
    <source>
        <strain>ATCC 204508 / S288c</strain>
    </source>
</reference>
<reference key="5">
    <citation type="journal article" date="2007" name="Genome Res.">
        <title>Approaching a complete repository of sequence-verified protein-encoding clones for Saccharomyces cerevisiae.</title>
        <authorList>
            <person name="Hu Y."/>
            <person name="Rolfs A."/>
            <person name="Bhullar B."/>
            <person name="Murthy T.V.S."/>
            <person name="Zhu C."/>
            <person name="Berger M.F."/>
            <person name="Camargo A.A."/>
            <person name="Kelley F."/>
            <person name="McCarron S."/>
            <person name="Jepson D."/>
            <person name="Richardson A."/>
            <person name="Raphael J."/>
            <person name="Moreira D."/>
            <person name="Taycher E."/>
            <person name="Zuo D."/>
            <person name="Mohr S."/>
            <person name="Kane M.F."/>
            <person name="Williamson J."/>
            <person name="Simpson A.J.G."/>
            <person name="Bulyk M.L."/>
            <person name="Harlow E."/>
            <person name="Marsischky G."/>
            <person name="Kolodner R.D."/>
            <person name="LaBaer J."/>
        </authorList>
    </citation>
    <scope>NUCLEOTIDE SEQUENCE [GENOMIC DNA]</scope>
    <source>
        <strain>ATCC 204508 / S288c</strain>
    </source>
</reference>
<reference key="6">
    <citation type="submission" date="1995-08" db="EMBL/GenBank/DDBJ databases">
        <authorList>
            <person name="Bun-Ya M."/>
            <person name="Yompakdee C."/>
            <person name="Shikata K."/>
            <person name="Ogawa N."/>
            <person name="Harashima S."/>
            <person name="Oshima Y."/>
        </authorList>
    </citation>
    <scope>NUCLEOTIDE SEQUENCE [GENOMIC DNA] OF 31-337</scope>
    <source>
        <strain>S288c / GRF88</strain>
    </source>
</reference>
<protein>
    <recommendedName>
        <fullName>Beta-glucosidase-like protein NCA3, mitochondrial</fullName>
    </recommendedName>
</protein>
<accession>P46955</accession>
<accession>D6VW68</accession>
<accession>E9P8T8</accession>
<comment type="function">
    <text>Involved in the mitochondrial expression of subunits 6 and 8 of the F0-F1 ATP synthase.</text>
</comment>
<comment type="subcellular location">
    <subcellularLocation>
        <location>Mitochondrion</location>
    </subcellularLocation>
</comment>
<comment type="similarity">
    <text evidence="3">Belongs to the SUN family.</text>
</comment>